<evidence type="ECO:0000255" key="1">
    <source>
        <dbReference type="HAMAP-Rule" id="MF_01972"/>
    </source>
</evidence>
<evidence type="ECO:0000256" key="2">
    <source>
        <dbReference type="SAM" id="MobiDB-lite"/>
    </source>
</evidence>
<feature type="chain" id="PRO_0000419537" description="Tryptophan 2,3-dioxygenase 1">
    <location>
        <begin position="1"/>
        <end position="294"/>
    </location>
</feature>
<feature type="region of interest" description="Disordered" evidence="2">
    <location>
        <begin position="1"/>
        <end position="20"/>
    </location>
</feature>
<feature type="binding site" evidence="1">
    <location>
        <begin position="63"/>
        <end position="67"/>
    </location>
    <ligand>
        <name>substrate</name>
    </ligand>
</feature>
<feature type="binding site" evidence="1">
    <location>
        <position position="125"/>
    </location>
    <ligand>
        <name>substrate</name>
    </ligand>
</feature>
<feature type="binding site" evidence="1">
    <location>
        <position position="129"/>
    </location>
    <ligand>
        <name>substrate</name>
    </ligand>
</feature>
<feature type="binding site" description="axial binding residue" evidence="1">
    <location>
        <position position="252"/>
    </location>
    <ligand>
        <name>heme</name>
        <dbReference type="ChEBI" id="CHEBI:30413"/>
    </ligand>
    <ligandPart>
        <name>Fe</name>
        <dbReference type="ChEBI" id="CHEBI:18248"/>
    </ligandPart>
</feature>
<feature type="binding site" evidence="1">
    <location>
        <position position="266"/>
    </location>
    <ligand>
        <name>substrate</name>
    </ligand>
</feature>
<reference key="1">
    <citation type="journal article" date="2002" name="Nature">
        <title>Genome sequence of the plant pathogen Ralstonia solanacearum.</title>
        <authorList>
            <person name="Salanoubat M."/>
            <person name="Genin S."/>
            <person name="Artiguenave F."/>
            <person name="Gouzy J."/>
            <person name="Mangenot S."/>
            <person name="Arlat M."/>
            <person name="Billault A."/>
            <person name="Brottier P."/>
            <person name="Camus J.-C."/>
            <person name="Cattolico L."/>
            <person name="Chandler M."/>
            <person name="Choisne N."/>
            <person name="Claudel-Renard C."/>
            <person name="Cunnac S."/>
            <person name="Demange N."/>
            <person name="Gaspin C."/>
            <person name="Lavie M."/>
            <person name="Moisan A."/>
            <person name="Robert C."/>
            <person name="Saurin W."/>
            <person name="Schiex T."/>
            <person name="Siguier P."/>
            <person name="Thebault P."/>
            <person name="Whalen M."/>
            <person name="Wincker P."/>
            <person name="Levy M."/>
            <person name="Weissenbach J."/>
            <person name="Boucher C.A."/>
        </authorList>
    </citation>
    <scope>NUCLEOTIDE SEQUENCE [LARGE SCALE GENOMIC DNA]</scope>
    <source>
        <strain>ATCC BAA-1114 / GMI1000</strain>
    </source>
</reference>
<accession>Q8Y1D2</accession>
<keyword id="KW-0223">Dioxygenase</keyword>
<keyword id="KW-0349">Heme</keyword>
<keyword id="KW-0408">Iron</keyword>
<keyword id="KW-0479">Metal-binding</keyword>
<keyword id="KW-0560">Oxidoreductase</keyword>
<keyword id="KW-1185">Reference proteome</keyword>
<keyword id="KW-0823">Tryptophan catabolism</keyword>
<dbReference type="EC" id="1.13.11.11" evidence="1"/>
<dbReference type="EMBL" id="AL646052">
    <property type="protein sequence ID" value="CAD14288.1"/>
    <property type="molecule type" value="Genomic_DNA"/>
</dbReference>
<dbReference type="SMR" id="Q8Y1D2"/>
<dbReference type="STRING" id="267608.RSc0758"/>
<dbReference type="EnsemblBacteria" id="CAD14288">
    <property type="protein sequence ID" value="CAD14288"/>
    <property type="gene ID" value="RSc0758"/>
</dbReference>
<dbReference type="KEGG" id="rso:RSc0758"/>
<dbReference type="eggNOG" id="COG3483">
    <property type="taxonomic scope" value="Bacteria"/>
</dbReference>
<dbReference type="HOGENOM" id="CLU_063240_0_0_4"/>
<dbReference type="UniPathway" id="UPA00333">
    <property type="reaction ID" value="UER00453"/>
</dbReference>
<dbReference type="Proteomes" id="UP000001436">
    <property type="component" value="Chromosome"/>
</dbReference>
<dbReference type="GO" id="GO:0020037">
    <property type="term" value="F:heme binding"/>
    <property type="evidence" value="ECO:0007669"/>
    <property type="project" value="UniProtKB-UniRule"/>
</dbReference>
<dbReference type="GO" id="GO:0046872">
    <property type="term" value="F:metal ion binding"/>
    <property type="evidence" value="ECO:0007669"/>
    <property type="project" value="UniProtKB-KW"/>
</dbReference>
<dbReference type="GO" id="GO:0004833">
    <property type="term" value="F:tryptophan 2,3-dioxygenase activity"/>
    <property type="evidence" value="ECO:0007669"/>
    <property type="project" value="UniProtKB-UniRule"/>
</dbReference>
<dbReference type="GO" id="GO:0019442">
    <property type="term" value="P:L-tryptophan catabolic process to acetyl-CoA"/>
    <property type="evidence" value="ECO:0007669"/>
    <property type="project" value="TreeGrafter"/>
</dbReference>
<dbReference type="GO" id="GO:0019441">
    <property type="term" value="P:L-tryptophan catabolic process to kynurenine"/>
    <property type="evidence" value="ECO:0007669"/>
    <property type="project" value="UniProtKB-UniRule"/>
</dbReference>
<dbReference type="FunFam" id="1.20.58.480:FF:000001">
    <property type="entry name" value="Tryptophan 2,3-dioxygenase"/>
    <property type="match status" value="1"/>
</dbReference>
<dbReference type="Gene3D" id="1.20.58.480">
    <property type="match status" value="1"/>
</dbReference>
<dbReference type="HAMAP" id="MF_01972">
    <property type="entry name" value="T23O"/>
    <property type="match status" value="1"/>
</dbReference>
<dbReference type="InterPro" id="IPR037217">
    <property type="entry name" value="Trp/Indoleamine_2_3_dOase-like"/>
</dbReference>
<dbReference type="InterPro" id="IPR017485">
    <property type="entry name" value="Trp_2-3-dOase_bac"/>
</dbReference>
<dbReference type="InterPro" id="IPR004981">
    <property type="entry name" value="Trp_2_3_dOase"/>
</dbReference>
<dbReference type="NCBIfam" id="TIGR03036">
    <property type="entry name" value="trp_2_3_diox"/>
    <property type="match status" value="1"/>
</dbReference>
<dbReference type="PANTHER" id="PTHR10138">
    <property type="entry name" value="TRYPTOPHAN 2,3-DIOXYGENASE"/>
    <property type="match status" value="1"/>
</dbReference>
<dbReference type="PANTHER" id="PTHR10138:SF0">
    <property type="entry name" value="TRYPTOPHAN 2,3-DIOXYGENASE"/>
    <property type="match status" value="1"/>
</dbReference>
<dbReference type="Pfam" id="PF03301">
    <property type="entry name" value="Trp_dioxygenase"/>
    <property type="match status" value="1"/>
</dbReference>
<dbReference type="SUPFAM" id="SSF140959">
    <property type="entry name" value="Indolic compounds 2,3-dioxygenase-like"/>
    <property type="match status" value="1"/>
</dbReference>
<comment type="function">
    <text evidence="1">Heme-dependent dioxygenase that catalyzes the oxidative cleavage of the L-tryptophan (L-Trp) pyrrole ring and converts L-tryptophan to N-formyl-L-kynurenine. Catalyzes the oxidative cleavage of the indole moiety.</text>
</comment>
<comment type="catalytic activity">
    <reaction evidence="1">
        <text>L-tryptophan + O2 = N-formyl-L-kynurenine</text>
        <dbReference type="Rhea" id="RHEA:24536"/>
        <dbReference type="ChEBI" id="CHEBI:15379"/>
        <dbReference type="ChEBI" id="CHEBI:57912"/>
        <dbReference type="ChEBI" id="CHEBI:58629"/>
        <dbReference type="EC" id="1.13.11.11"/>
    </reaction>
</comment>
<comment type="cofactor">
    <cofactor evidence="1">
        <name>heme</name>
        <dbReference type="ChEBI" id="CHEBI:30413"/>
    </cofactor>
    <text evidence="1">Binds 1 heme group per subunit.</text>
</comment>
<comment type="pathway">
    <text evidence="1">Amino-acid degradation; L-tryptophan degradation via kynurenine pathway; L-kynurenine from L-tryptophan: step 1/2.</text>
</comment>
<comment type="subunit">
    <text evidence="1">Homotetramer.</text>
</comment>
<comment type="similarity">
    <text evidence="1">Belongs to the tryptophan 2,3-dioxygenase family.</text>
</comment>
<gene>
    <name evidence="1" type="primary">kynA1</name>
    <name type="ordered locus">RSc0758</name>
</gene>
<sequence>MSEPIQPTRPAASGCPMHGAQAESWHDAQMDFSKSMSYGDYLALDQILNAQHPRSPDHNEMLFIVQHQTTELWMKLMLHELRAARDCVRNDDLPPAFKMLARVSRIMDQLVQAWNVLATMTPPEYSAMRPHLGQSSGFQSYQYREIEFILGNKNAAMLQPHAHQPEHYAQVKAALETPSLYDEAIRYMARHGFAFDADCIERDWSRPVTYNASVEAAWLEVYRDPTHHWELYELAEKFVDLEDAFRQWRFRHVTTVERVIGFKRGTGGTEGVNYLRKMLDVVLFPELWKLRTDL</sequence>
<name>T23O1_RALN1</name>
<proteinExistence type="inferred from homology"/>
<protein>
    <recommendedName>
        <fullName evidence="1">Tryptophan 2,3-dioxygenase 1</fullName>
        <shortName evidence="1">TDO-1</shortName>
        <ecNumber evidence="1">1.13.11.11</ecNumber>
    </recommendedName>
    <alternativeName>
        <fullName evidence="1">Tryptamin 2,3-dioxygenase 1</fullName>
    </alternativeName>
    <alternativeName>
        <fullName evidence="1">Tryptophan oxygenase 1</fullName>
        <shortName evidence="1">TO-1</shortName>
        <shortName evidence="1">TRPO-1</shortName>
    </alternativeName>
    <alternativeName>
        <fullName evidence="1">Tryptophan pyrrolase 1</fullName>
    </alternativeName>
    <alternativeName>
        <fullName evidence="1">Tryptophanase 1</fullName>
    </alternativeName>
</protein>
<organism>
    <name type="scientific">Ralstonia nicotianae (strain ATCC BAA-1114 / GMI1000)</name>
    <name type="common">Ralstonia solanacearum</name>
    <dbReference type="NCBI Taxonomy" id="267608"/>
    <lineage>
        <taxon>Bacteria</taxon>
        <taxon>Pseudomonadati</taxon>
        <taxon>Pseudomonadota</taxon>
        <taxon>Betaproteobacteria</taxon>
        <taxon>Burkholderiales</taxon>
        <taxon>Burkholderiaceae</taxon>
        <taxon>Ralstonia</taxon>
        <taxon>Ralstonia solanacearum species complex</taxon>
    </lineage>
</organism>